<proteinExistence type="inferred from homology"/>
<gene>
    <name type="primary">MRPL4</name>
    <name type="ordered locus">DEHA2E04532g</name>
    <name type="ORF">DEHA0E05258g</name>
</gene>
<keyword id="KW-0496">Mitochondrion</keyword>
<keyword id="KW-1185">Reference proteome</keyword>
<keyword id="KW-0687">Ribonucleoprotein</keyword>
<keyword id="KW-0689">Ribosomal protein</keyword>
<keyword id="KW-0809">Transit peptide</keyword>
<comment type="subunit">
    <text evidence="1">Component of the mitochondrial large ribosomal subunit. Mature mitochondrial ribosomes consist of a small (37S) and a large (54S) subunit. The 37S subunit contains at least 33 different proteins and 1 molecule of RNA (15S). The 54S subunit contains at least 45 different proteins and 1 molecule of RNA (21S) (By similarity).</text>
</comment>
<comment type="subcellular location">
    <subcellularLocation>
        <location evidence="1">Mitochondrion</location>
    </subcellularLocation>
</comment>
<comment type="similarity">
    <text evidence="3">Belongs to the universal ribosomal protein uL29 family.</text>
</comment>
<protein>
    <recommendedName>
        <fullName evidence="3">Large ribosomal subunit protein uL29m</fullName>
    </recommendedName>
    <alternativeName>
        <fullName>54S ribosomal protein L4, mitochondrial</fullName>
    </alternativeName>
</protein>
<evidence type="ECO:0000250" key="1"/>
<evidence type="ECO:0000255" key="2"/>
<evidence type="ECO:0000305" key="3"/>
<accession>Q6BQK3</accession>
<name>RM04_DEBHA</name>
<organism>
    <name type="scientific">Debaryomyces hansenii (strain ATCC 36239 / CBS 767 / BCRC 21394 / JCM 1990 / NBRC 0083 / IGC 2968)</name>
    <name type="common">Yeast</name>
    <name type="synonym">Torulaspora hansenii</name>
    <dbReference type="NCBI Taxonomy" id="284592"/>
    <lineage>
        <taxon>Eukaryota</taxon>
        <taxon>Fungi</taxon>
        <taxon>Dikarya</taxon>
        <taxon>Ascomycota</taxon>
        <taxon>Saccharomycotina</taxon>
        <taxon>Pichiomycetes</taxon>
        <taxon>Debaryomycetaceae</taxon>
        <taxon>Debaryomyces</taxon>
    </lineage>
</organism>
<sequence>MASHLSIRSLSGSSRYLARNKALKFTDLKSIKLREPIVPTHKNFDVSPDHPLWAFFPDGNKSETCFRETVDLDIQSRPWGLPELRRKSFEDLHKLWYLILKERNILAREVRLADSFNERSTHAHNDLDDKLTLTQKRIKQALIERQVAYERVQTFTDNQKEYLSDFEESYINADSSEIVSFNEKLVRLQYAFFGIQPQLEDYNLEEDINVKFVEGLSYVANLKLKRYLSQNPQSTEEFQTPLNGVVEELPFLLRDTEEAIEEVQELRNSGANVVLHKIEVFPFLRNALGKTIQEAYASDEQL</sequence>
<dbReference type="EMBL" id="CR382137">
    <property type="protein sequence ID" value="CAG87743.2"/>
    <property type="molecule type" value="Genomic_DNA"/>
</dbReference>
<dbReference type="RefSeq" id="XP_459517.2">
    <property type="nucleotide sequence ID" value="XM_459517.1"/>
</dbReference>
<dbReference type="SMR" id="Q6BQK3"/>
<dbReference type="FunCoup" id="Q6BQK3">
    <property type="interactions" value="249"/>
</dbReference>
<dbReference type="STRING" id="284592.Q6BQK3"/>
<dbReference type="GeneID" id="2902348"/>
<dbReference type="KEGG" id="dha:DEHA2E04532g"/>
<dbReference type="VEuPathDB" id="FungiDB:DEHA2E04532g"/>
<dbReference type="eggNOG" id="KOG3331">
    <property type="taxonomic scope" value="Eukaryota"/>
</dbReference>
<dbReference type="HOGENOM" id="CLU_872105_0_0_1"/>
<dbReference type="InParanoid" id="Q6BQK3"/>
<dbReference type="OMA" id="IRTTMWR"/>
<dbReference type="OrthoDB" id="270763at2759"/>
<dbReference type="Proteomes" id="UP000000599">
    <property type="component" value="Chromosome E"/>
</dbReference>
<dbReference type="GO" id="GO:0005762">
    <property type="term" value="C:mitochondrial large ribosomal subunit"/>
    <property type="evidence" value="ECO:0007669"/>
    <property type="project" value="TreeGrafter"/>
</dbReference>
<dbReference type="GO" id="GO:0003735">
    <property type="term" value="F:structural constituent of ribosome"/>
    <property type="evidence" value="ECO:0007669"/>
    <property type="project" value="InterPro"/>
</dbReference>
<dbReference type="GO" id="GO:0032543">
    <property type="term" value="P:mitochondrial translation"/>
    <property type="evidence" value="ECO:0007669"/>
    <property type="project" value="TreeGrafter"/>
</dbReference>
<dbReference type="Gene3D" id="6.10.140.1190">
    <property type="match status" value="1"/>
</dbReference>
<dbReference type="Gene3D" id="6.10.330.20">
    <property type="match status" value="1"/>
</dbReference>
<dbReference type="InterPro" id="IPR038340">
    <property type="entry name" value="MRP-L47_sf"/>
</dbReference>
<dbReference type="InterPro" id="IPR010729">
    <property type="entry name" value="Ribosomal_uL29_mit"/>
</dbReference>
<dbReference type="PANTHER" id="PTHR21183:SF18">
    <property type="entry name" value="LARGE RIBOSOMAL SUBUNIT PROTEIN UL29M"/>
    <property type="match status" value="1"/>
</dbReference>
<dbReference type="PANTHER" id="PTHR21183">
    <property type="entry name" value="RIBOSOMAL PROTEIN L47, MITOCHONDRIAL-RELATED"/>
    <property type="match status" value="1"/>
</dbReference>
<dbReference type="Pfam" id="PF06984">
    <property type="entry name" value="MRP-L47"/>
    <property type="match status" value="1"/>
</dbReference>
<feature type="transit peptide" description="Mitochondrion" evidence="2">
    <location>
        <begin position="1"/>
        <end status="unknown"/>
    </location>
</feature>
<feature type="chain" id="PRO_0000372401" description="Large ribosomal subunit protein uL29m">
    <location>
        <begin status="unknown"/>
        <end position="302"/>
    </location>
</feature>
<reference key="1">
    <citation type="journal article" date="2004" name="Nature">
        <title>Genome evolution in yeasts.</title>
        <authorList>
            <person name="Dujon B."/>
            <person name="Sherman D."/>
            <person name="Fischer G."/>
            <person name="Durrens P."/>
            <person name="Casaregola S."/>
            <person name="Lafontaine I."/>
            <person name="de Montigny J."/>
            <person name="Marck C."/>
            <person name="Neuveglise C."/>
            <person name="Talla E."/>
            <person name="Goffard N."/>
            <person name="Frangeul L."/>
            <person name="Aigle M."/>
            <person name="Anthouard V."/>
            <person name="Babour A."/>
            <person name="Barbe V."/>
            <person name="Barnay S."/>
            <person name="Blanchin S."/>
            <person name="Beckerich J.-M."/>
            <person name="Beyne E."/>
            <person name="Bleykasten C."/>
            <person name="Boisrame A."/>
            <person name="Boyer J."/>
            <person name="Cattolico L."/>
            <person name="Confanioleri F."/>
            <person name="de Daruvar A."/>
            <person name="Despons L."/>
            <person name="Fabre E."/>
            <person name="Fairhead C."/>
            <person name="Ferry-Dumazet H."/>
            <person name="Groppi A."/>
            <person name="Hantraye F."/>
            <person name="Hennequin C."/>
            <person name="Jauniaux N."/>
            <person name="Joyet P."/>
            <person name="Kachouri R."/>
            <person name="Kerrest A."/>
            <person name="Koszul R."/>
            <person name="Lemaire M."/>
            <person name="Lesur I."/>
            <person name="Ma L."/>
            <person name="Muller H."/>
            <person name="Nicaud J.-M."/>
            <person name="Nikolski M."/>
            <person name="Oztas S."/>
            <person name="Ozier-Kalogeropoulos O."/>
            <person name="Pellenz S."/>
            <person name="Potier S."/>
            <person name="Richard G.-F."/>
            <person name="Straub M.-L."/>
            <person name="Suleau A."/>
            <person name="Swennen D."/>
            <person name="Tekaia F."/>
            <person name="Wesolowski-Louvel M."/>
            <person name="Westhof E."/>
            <person name="Wirth B."/>
            <person name="Zeniou-Meyer M."/>
            <person name="Zivanovic Y."/>
            <person name="Bolotin-Fukuhara M."/>
            <person name="Thierry A."/>
            <person name="Bouchier C."/>
            <person name="Caudron B."/>
            <person name="Scarpelli C."/>
            <person name="Gaillardin C."/>
            <person name="Weissenbach J."/>
            <person name="Wincker P."/>
            <person name="Souciet J.-L."/>
        </authorList>
    </citation>
    <scope>NUCLEOTIDE SEQUENCE [LARGE SCALE GENOMIC DNA]</scope>
    <source>
        <strain>ATCC 36239 / CBS 767 / BCRC 21394 / JCM 1990 / NBRC 0083 / IGC 2968</strain>
    </source>
</reference>